<feature type="chain" id="PRO_1000129145" description="Succinate--CoA ligase [ADP-forming] subunit beta">
    <location>
        <begin position="1"/>
        <end position="388"/>
    </location>
</feature>
<feature type="domain" description="ATP-grasp" evidence="1">
    <location>
        <begin position="9"/>
        <end position="245"/>
    </location>
</feature>
<feature type="binding site" evidence="1">
    <location>
        <position position="46"/>
    </location>
    <ligand>
        <name>ATP</name>
        <dbReference type="ChEBI" id="CHEBI:30616"/>
    </ligand>
</feature>
<feature type="binding site" evidence="1">
    <location>
        <begin position="53"/>
        <end position="55"/>
    </location>
    <ligand>
        <name>ATP</name>
        <dbReference type="ChEBI" id="CHEBI:30616"/>
    </ligand>
</feature>
<feature type="binding site" evidence="1">
    <location>
        <position position="100"/>
    </location>
    <ligand>
        <name>ATP</name>
        <dbReference type="ChEBI" id="CHEBI:30616"/>
    </ligand>
</feature>
<feature type="binding site" evidence="1">
    <location>
        <position position="103"/>
    </location>
    <ligand>
        <name>ATP</name>
        <dbReference type="ChEBI" id="CHEBI:30616"/>
    </ligand>
</feature>
<feature type="binding site" evidence="1">
    <location>
        <position position="108"/>
    </location>
    <ligand>
        <name>ATP</name>
        <dbReference type="ChEBI" id="CHEBI:30616"/>
    </ligand>
</feature>
<feature type="binding site" evidence="1">
    <location>
        <position position="200"/>
    </location>
    <ligand>
        <name>Mg(2+)</name>
        <dbReference type="ChEBI" id="CHEBI:18420"/>
    </ligand>
</feature>
<feature type="binding site" evidence="1">
    <location>
        <position position="214"/>
    </location>
    <ligand>
        <name>Mg(2+)</name>
        <dbReference type="ChEBI" id="CHEBI:18420"/>
    </ligand>
</feature>
<feature type="binding site" evidence="1">
    <location>
        <position position="265"/>
    </location>
    <ligand>
        <name>substrate</name>
        <note>ligand shared with subunit alpha</note>
    </ligand>
</feature>
<feature type="binding site" evidence="1">
    <location>
        <begin position="322"/>
        <end position="324"/>
    </location>
    <ligand>
        <name>substrate</name>
        <note>ligand shared with subunit alpha</note>
    </ligand>
</feature>
<dbReference type="EC" id="6.2.1.5" evidence="1"/>
<dbReference type="EMBL" id="CP001172">
    <property type="protein sequence ID" value="ACJ57268.1"/>
    <property type="molecule type" value="Genomic_DNA"/>
</dbReference>
<dbReference type="RefSeq" id="WP_001048573.1">
    <property type="nucleotide sequence ID" value="NZ_CP001172.1"/>
</dbReference>
<dbReference type="SMR" id="B7GXK7"/>
<dbReference type="GeneID" id="92894978"/>
<dbReference type="HOGENOM" id="CLU_037430_0_2_6"/>
<dbReference type="UniPathway" id="UPA00223">
    <property type="reaction ID" value="UER00999"/>
</dbReference>
<dbReference type="Proteomes" id="UP000006924">
    <property type="component" value="Chromosome"/>
</dbReference>
<dbReference type="GO" id="GO:0005829">
    <property type="term" value="C:cytosol"/>
    <property type="evidence" value="ECO:0007669"/>
    <property type="project" value="TreeGrafter"/>
</dbReference>
<dbReference type="GO" id="GO:0042709">
    <property type="term" value="C:succinate-CoA ligase complex"/>
    <property type="evidence" value="ECO:0007669"/>
    <property type="project" value="TreeGrafter"/>
</dbReference>
<dbReference type="GO" id="GO:0005524">
    <property type="term" value="F:ATP binding"/>
    <property type="evidence" value="ECO:0007669"/>
    <property type="project" value="UniProtKB-UniRule"/>
</dbReference>
<dbReference type="GO" id="GO:0000287">
    <property type="term" value="F:magnesium ion binding"/>
    <property type="evidence" value="ECO:0007669"/>
    <property type="project" value="UniProtKB-UniRule"/>
</dbReference>
<dbReference type="GO" id="GO:0004775">
    <property type="term" value="F:succinate-CoA ligase (ADP-forming) activity"/>
    <property type="evidence" value="ECO:0007669"/>
    <property type="project" value="UniProtKB-UniRule"/>
</dbReference>
<dbReference type="GO" id="GO:0004776">
    <property type="term" value="F:succinate-CoA ligase (GDP-forming) activity"/>
    <property type="evidence" value="ECO:0007669"/>
    <property type="project" value="RHEA"/>
</dbReference>
<dbReference type="GO" id="GO:0006104">
    <property type="term" value="P:succinyl-CoA metabolic process"/>
    <property type="evidence" value="ECO:0007669"/>
    <property type="project" value="TreeGrafter"/>
</dbReference>
<dbReference type="GO" id="GO:0006099">
    <property type="term" value="P:tricarboxylic acid cycle"/>
    <property type="evidence" value="ECO:0007669"/>
    <property type="project" value="UniProtKB-UniRule"/>
</dbReference>
<dbReference type="FunFam" id="3.30.1490.20:FF:000002">
    <property type="entry name" value="Succinate--CoA ligase [ADP-forming] subunit beta"/>
    <property type="match status" value="1"/>
</dbReference>
<dbReference type="FunFam" id="3.30.470.20:FF:000002">
    <property type="entry name" value="Succinate--CoA ligase [ADP-forming] subunit beta"/>
    <property type="match status" value="1"/>
</dbReference>
<dbReference type="FunFam" id="3.40.50.261:FF:000001">
    <property type="entry name" value="Succinate--CoA ligase [ADP-forming] subunit beta"/>
    <property type="match status" value="1"/>
</dbReference>
<dbReference type="Gene3D" id="3.30.1490.20">
    <property type="entry name" value="ATP-grasp fold, A domain"/>
    <property type="match status" value="1"/>
</dbReference>
<dbReference type="Gene3D" id="3.30.470.20">
    <property type="entry name" value="ATP-grasp fold, B domain"/>
    <property type="match status" value="1"/>
</dbReference>
<dbReference type="Gene3D" id="3.40.50.261">
    <property type="entry name" value="Succinyl-CoA synthetase domains"/>
    <property type="match status" value="1"/>
</dbReference>
<dbReference type="HAMAP" id="MF_00558">
    <property type="entry name" value="Succ_CoA_beta"/>
    <property type="match status" value="1"/>
</dbReference>
<dbReference type="InterPro" id="IPR011761">
    <property type="entry name" value="ATP-grasp"/>
</dbReference>
<dbReference type="InterPro" id="IPR013650">
    <property type="entry name" value="ATP-grasp_succ-CoA_synth-type"/>
</dbReference>
<dbReference type="InterPro" id="IPR013815">
    <property type="entry name" value="ATP_grasp_subdomain_1"/>
</dbReference>
<dbReference type="InterPro" id="IPR017866">
    <property type="entry name" value="Succ-CoA_synthase_bsu_CS"/>
</dbReference>
<dbReference type="InterPro" id="IPR005811">
    <property type="entry name" value="SUCC_ACL_C"/>
</dbReference>
<dbReference type="InterPro" id="IPR005809">
    <property type="entry name" value="Succ_CoA_ligase-like_bsu"/>
</dbReference>
<dbReference type="InterPro" id="IPR016102">
    <property type="entry name" value="Succinyl-CoA_synth-like"/>
</dbReference>
<dbReference type="NCBIfam" id="NF001913">
    <property type="entry name" value="PRK00696.1"/>
    <property type="match status" value="1"/>
</dbReference>
<dbReference type="NCBIfam" id="TIGR01016">
    <property type="entry name" value="sucCoAbeta"/>
    <property type="match status" value="1"/>
</dbReference>
<dbReference type="PANTHER" id="PTHR11815:SF10">
    <property type="entry name" value="SUCCINATE--COA LIGASE [GDP-FORMING] SUBUNIT BETA, MITOCHONDRIAL"/>
    <property type="match status" value="1"/>
</dbReference>
<dbReference type="PANTHER" id="PTHR11815">
    <property type="entry name" value="SUCCINYL-COA SYNTHETASE BETA CHAIN"/>
    <property type="match status" value="1"/>
</dbReference>
<dbReference type="Pfam" id="PF08442">
    <property type="entry name" value="ATP-grasp_2"/>
    <property type="match status" value="1"/>
</dbReference>
<dbReference type="Pfam" id="PF00549">
    <property type="entry name" value="Ligase_CoA"/>
    <property type="match status" value="1"/>
</dbReference>
<dbReference type="PIRSF" id="PIRSF001554">
    <property type="entry name" value="SucCS_beta"/>
    <property type="match status" value="1"/>
</dbReference>
<dbReference type="SUPFAM" id="SSF56059">
    <property type="entry name" value="Glutathione synthetase ATP-binding domain-like"/>
    <property type="match status" value="1"/>
</dbReference>
<dbReference type="SUPFAM" id="SSF52210">
    <property type="entry name" value="Succinyl-CoA synthetase domains"/>
    <property type="match status" value="1"/>
</dbReference>
<dbReference type="PROSITE" id="PS50975">
    <property type="entry name" value="ATP_GRASP"/>
    <property type="match status" value="1"/>
</dbReference>
<dbReference type="PROSITE" id="PS01217">
    <property type="entry name" value="SUCCINYL_COA_LIG_3"/>
    <property type="match status" value="1"/>
</dbReference>
<sequence>MNLHEYQAKALLKEYGMPVQEGILATNADEAVAAFEQLGGKFAVMKAQVHAGGRGKAGGVKVAKSKEDVIEFANNIIGTRLVTYQTDANGQPVNSIIVAEDVYPVERELYLGAVVDRSSRRITFMASTEGGVEIEKVAEETPEKIIKVEVDPLVGLQPFQAREVAFALGLKDKQIGQFVKIMTAAYQAFVENDFALFEINPLSVRENGEILCVDAKVGIDSNALYRLPKVAALRDKSQENERELKASEFDLNYVALEGNIGCMVNGAGLAMATMDIIKLYGGQPANFLDVGGGATKERVIEAFKIILADTSVQGVLINIFGGIVRCDMIAEAIIAAVQEVNVTVPVVVRLEGNNAELGAKLLDESGLKLISANGLSDAAEKVVAAVKA</sequence>
<accession>B7GXK7</accession>
<organism>
    <name type="scientific">Acinetobacter baumannii (strain AB307-0294)</name>
    <dbReference type="NCBI Taxonomy" id="557600"/>
    <lineage>
        <taxon>Bacteria</taxon>
        <taxon>Pseudomonadati</taxon>
        <taxon>Pseudomonadota</taxon>
        <taxon>Gammaproteobacteria</taxon>
        <taxon>Moraxellales</taxon>
        <taxon>Moraxellaceae</taxon>
        <taxon>Acinetobacter</taxon>
        <taxon>Acinetobacter calcoaceticus/baumannii complex</taxon>
    </lineage>
</organism>
<protein>
    <recommendedName>
        <fullName evidence="1">Succinate--CoA ligase [ADP-forming] subunit beta</fullName>
        <ecNumber evidence="1">6.2.1.5</ecNumber>
    </recommendedName>
    <alternativeName>
        <fullName evidence="1">Succinyl-CoA synthetase subunit beta</fullName>
        <shortName evidence="1">SCS-beta</shortName>
    </alternativeName>
</protein>
<reference key="1">
    <citation type="journal article" date="2008" name="J. Bacteriol.">
        <title>Comparative genome sequence analysis of multidrug-resistant Acinetobacter baumannii.</title>
        <authorList>
            <person name="Adams M.D."/>
            <person name="Goglin K."/>
            <person name="Molyneaux N."/>
            <person name="Hujer K.M."/>
            <person name="Lavender H."/>
            <person name="Jamison J.J."/>
            <person name="MacDonald I.J."/>
            <person name="Martin K.M."/>
            <person name="Russo T."/>
            <person name="Campagnari A.A."/>
            <person name="Hujer A.M."/>
            <person name="Bonomo R.A."/>
            <person name="Gill S.R."/>
        </authorList>
    </citation>
    <scope>NUCLEOTIDE SEQUENCE [LARGE SCALE GENOMIC DNA]</scope>
    <source>
        <strain>AB307-0294</strain>
    </source>
</reference>
<proteinExistence type="inferred from homology"/>
<gene>
    <name evidence="1" type="primary">sucC</name>
    <name type="ordered locus">ABBFA_000766</name>
</gene>
<keyword id="KW-0067">ATP-binding</keyword>
<keyword id="KW-0436">Ligase</keyword>
<keyword id="KW-0460">Magnesium</keyword>
<keyword id="KW-0479">Metal-binding</keyword>
<keyword id="KW-0547">Nucleotide-binding</keyword>
<keyword id="KW-0816">Tricarboxylic acid cycle</keyword>
<evidence type="ECO:0000255" key="1">
    <source>
        <dbReference type="HAMAP-Rule" id="MF_00558"/>
    </source>
</evidence>
<name>SUCC_ACIB3</name>
<comment type="function">
    <text evidence="1">Succinyl-CoA synthetase functions in the citric acid cycle (TCA), coupling the hydrolysis of succinyl-CoA to the synthesis of either ATP or GTP and thus represents the only step of substrate-level phosphorylation in the TCA. The beta subunit provides nucleotide specificity of the enzyme and binds the substrate succinate, while the binding sites for coenzyme A and phosphate are found in the alpha subunit.</text>
</comment>
<comment type="catalytic activity">
    <reaction evidence="1">
        <text>succinate + ATP + CoA = succinyl-CoA + ADP + phosphate</text>
        <dbReference type="Rhea" id="RHEA:17661"/>
        <dbReference type="ChEBI" id="CHEBI:30031"/>
        <dbReference type="ChEBI" id="CHEBI:30616"/>
        <dbReference type="ChEBI" id="CHEBI:43474"/>
        <dbReference type="ChEBI" id="CHEBI:57287"/>
        <dbReference type="ChEBI" id="CHEBI:57292"/>
        <dbReference type="ChEBI" id="CHEBI:456216"/>
        <dbReference type="EC" id="6.2.1.5"/>
    </reaction>
    <physiologicalReaction direction="right-to-left" evidence="1">
        <dbReference type="Rhea" id="RHEA:17663"/>
    </physiologicalReaction>
</comment>
<comment type="catalytic activity">
    <reaction evidence="1">
        <text>GTP + succinate + CoA = succinyl-CoA + GDP + phosphate</text>
        <dbReference type="Rhea" id="RHEA:22120"/>
        <dbReference type="ChEBI" id="CHEBI:30031"/>
        <dbReference type="ChEBI" id="CHEBI:37565"/>
        <dbReference type="ChEBI" id="CHEBI:43474"/>
        <dbReference type="ChEBI" id="CHEBI:57287"/>
        <dbReference type="ChEBI" id="CHEBI:57292"/>
        <dbReference type="ChEBI" id="CHEBI:58189"/>
    </reaction>
    <physiologicalReaction direction="right-to-left" evidence="1">
        <dbReference type="Rhea" id="RHEA:22122"/>
    </physiologicalReaction>
</comment>
<comment type="cofactor">
    <cofactor evidence="1">
        <name>Mg(2+)</name>
        <dbReference type="ChEBI" id="CHEBI:18420"/>
    </cofactor>
    <text evidence="1">Binds 1 Mg(2+) ion per subunit.</text>
</comment>
<comment type="pathway">
    <text evidence="1">Carbohydrate metabolism; tricarboxylic acid cycle; succinate from succinyl-CoA (ligase route): step 1/1.</text>
</comment>
<comment type="subunit">
    <text evidence="1">Heterotetramer of two alpha and two beta subunits.</text>
</comment>
<comment type="similarity">
    <text evidence="1">Belongs to the succinate/malate CoA ligase beta subunit family.</text>
</comment>